<organism>
    <name type="scientific">Cupriavidus metallidurans (strain ATCC 43123 / DSM 2839 / NBRC 102507 / CH34)</name>
    <name type="common">Ralstonia metallidurans</name>
    <dbReference type="NCBI Taxonomy" id="266264"/>
    <lineage>
        <taxon>Bacteria</taxon>
        <taxon>Pseudomonadati</taxon>
        <taxon>Pseudomonadota</taxon>
        <taxon>Betaproteobacteria</taxon>
        <taxon>Burkholderiales</taxon>
        <taxon>Burkholderiaceae</taxon>
        <taxon>Cupriavidus</taxon>
    </lineage>
</organism>
<gene>
    <name evidence="1" type="primary">rpsQ</name>
    <name type="ordered locus">Rmet_3308</name>
</gene>
<sequence>MTEAAKTETSLRRTLVGRVVSDKMDKTVTVLIENRVKHPLYGKYVLRSKKYHAHDEANQYKEGDKVEIQETRPLSRTKSWVVSRLVEAARVI</sequence>
<protein>
    <recommendedName>
        <fullName evidence="1">Small ribosomal subunit protein uS17</fullName>
    </recommendedName>
    <alternativeName>
        <fullName evidence="2">30S ribosomal protein S17</fullName>
    </alternativeName>
</protein>
<evidence type="ECO:0000255" key="1">
    <source>
        <dbReference type="HAMAP-Rule" id="MF_01345"/>
    </source>
</evidence>
<evidence type="ECO:0000305" key="2"/>
<dbReference type="EMBL" id="CP000352">
    <property type="protein sequence ID" value="ABF10180.1"/>
    <property type="molecule type" value="Genomic_DNA"/>
</dbReference>
<dbReference type="RefSeq" id="WP_008642939.1">
    <property type="nucleotide sequence ID" value="NC_007973.1"/>
</dbReference>
<dbReference type="SMR" id="Q1LI46"/>
<dbReference type="STRING" id="266264.Rmet_3308"/>
<dbReference type="GeneID" id="92818450"/>
<dbReference type="KEGG" id="rme:Rmet_3308"/>
<dbReference type="eggNOG" id="COG0186">
    <property type="taxonomic scope" value="Bacteria"/>
</dbReference>
<dbReference type="HOGENOM" id="CLU_073626_1_1_4"/>
<dbReference type="Proteomes" id="UP000002429">
    <property type="component" value="Chromosome"/>
</dbReference>
<dbReference type="GO" id="GO:0022627">
    <property type="term" value="C:cytosolic small ribosomal subunit"/>
    <property type="evidence" value="ECO:0007669"/>
    <property type="project" value="TreeGrafter"/>
</dbReference>
<dbReference type="GO" id="GO:0019843">
    <property type="term" value="F:rRNA binding"/>
    <property type="evidence" value="ECO:0007669"/>
    <property type="project" value="UniProtKB-UniRule"/>
</dbReference>
<dbReference type="GO" id="GO:0003735">
    <property type="term" value="F:structural constituent of ribosome"/>
    <property type="evidence" value="ECO:0007669"/>
    <property type="project" value="InterPro"/>
</dbReference>
<dbReference type="GO" id="GO:0006412">
    <property type="term" value="P:translation"/>
    <property type="evidence" value="ECO:0007669"/>
    <property type="project" value="UniProtKB-UniRule"/>
</dbReference>
<dbReference type="CDD" id="cd00364">
    <property type="entry name" value="Ribosomal_uS17"/>
    <property type="match status" value="1"/>
</dbReference>
<dbReference type="Gene3D" id="2.40.50.140">
    <property type="entry name" value="Nucleic acid-binding proteins"/>
    <property type="match status" value="1"/>
</dbReference>
<dbReference type="HAMAP" id="MF_01345_B">
    <property type="entry name" value="Ribosomal_uS17_B"/>
    <property type="match status" value="1"/>
</dbReference>
<dbReference type="InterPro" id="IPR012340">
    <property type="entry name" value="NA-bd_OB-fold"/>
</dbReference>
<dbReference type="InterPro" id="IPR000266">
    <property type="entry name" value="Ribosomal_uS17"/>
</dbReference>
<dbReference type="InterPro" id="IPR019984">
    <property type="entry name" value="Ribosomal_uS17_bact/chlr"/>
</dbReference>
<dbReference type="InterPro" id="IPR019979">
    <property type="entry name" value="Ribosomal_uS17_CS"/>
</dbReference>
<dbReference type="NCBIfam" id="NF004123">
    <property type="entry name" value="PRK05610.1"/>
    <property type="match status" value="1"/>
</dbReference>
<dbReference type="NCBIfam" id="TIGR03635">
    <property type="entry name" value="uS17_bact"/>
    <property type="match status" value="1"/>
</dbReference>
<dbReference type="PANTHER" id="PTHR10744">
    <property type="entry name" value="40S RIBOSOMAL PROTEIN S11 FAMILY MEMBER"/>
    <property type="match status" value="1"/>
</dbReference>
<dbReference type="PANTHER" id="PTHR10744:SF1">
    <property type="entry name" value="SMALL RIBOSOMAL SUBUNIT PROTEIN US17M"/>
    <property type="match status" value="1"/>
</dbReference>
<dbReference type="Pfam" id="PF00366">
    <property type="entry name" value="Ribosomal_S17"/>
    <property type="match status" value="1"/>
</dbReference>
<dbReference type="PRINTS" id="PR00973">
    <property type="entry name" value="RIBOSOMALS17"/>
</dbReference>
<dbReference type="SUPFAM" id="SSF50249">
    <property type="entry name" value="Nucleic acid-binding proteins"/>
    <property type="match status" value="1"/>
</dbReference>
<dbReference type="PROSITE" id="PS00056">
    <property type="entry name" value="RIBOSOMAL_S17"/>
    <property type="match status" value="1"/>
</dbReference>
<comment type="function">
    <text evidence="1">One of the primary rRNA binding proteins, it binds specifically to the 5'-end of 16S ribosomal RNA.</text>
</comment>
<comment type="subunit">
    <text evidence="1">Part of the 30S ribosomal subunit.</text>
</comment>
<comment type="similarity">
    <text evidence="1">Belongs to the universal ribosomal protein uS17 family.</text>
</comment>
<accession>Q1LI46</accession>
<keyword id="KW-1185">Reference proteome</keyword>
<keyword id="KW-0687">Ribonucleoprotein</keyword>
<keyword id="KW-0689">Ribosomal protein</keyword>
<keyword id="KW-0694">RNA-binding</keyword>
<keyword id="KW-0699">rRNA-binding</keyword>
<name>RS17_CUPMC</name>
<proteinExistence type="inferred from homology"/>
<feature type="chain" id="PRO_0000255690" description="Small ribosomal subunit protein uS17">
    <location>
        <begin position="1"/>
        <end position="92"/>
    </location>
</feature>
<reference key="1">
    <citation type="journal article" date="2010" name="PLoS ONE">
        <title>The complete genome sequence of Cupriavidus metallidurans strain CH34, a master survivalist in harsh and anthropogenic environments.</title>
        <authorList>
            <person name="Janssen P.J."/>
            <person name="Van Houdt R."/>
            <person name="Moors H."/>
            <person name="Monsieurs P."/>
            <person name="Morin N."/>
            <person name="Michaux A."/>
            <person name="Benotmane M.A."/>
            <person name="Leys N."/>
            <person name="Vallaeys T."/>
            <person name="Lapidus A."/>
            <person name="Monchy S."/>
            <person name="Medigue C."/>
            <person name="Taghavi S."/>
            <person name="McCorkle S."/>
            <person name="Dunn J."/>
            <person name="van der Lelie D."/>
            <person name="Mergeay M."/>
        </authorList>
    </citation>
    <scope>NUCLEOTIDE SEQUENCE [LARGE SCALE GENOMIC DNA]</scope>
    <source>
        <strain>ATCC 43123 / DSM 2839 / NBRC 102507 / CH34</strain>
    </source>
</reference>